<sequence length="241" mass="27100">MNLLQDQPAMGIDQTTLEHLARQWEDLAPEAILAEAVRCFGDKLVLASAFGPESIILLDMLVKVWPRPQAFFLETGFHFPETLALKDRVLARFPQLQLEVVGPLMSVAQQNAIYGERLHDRNPDHCCAIRKVEPLNRALAPYKAWIAGMRREQSPTRGQIGVVQWDSRRGMVKFNPLATWTHKQVWAYIVERDLPYNPLHDEGFPSIGCSPLNCTAPVADGADPRSGRWRGKAKTECGLHA</sequence>
<evidence type="ECO:0000255" key="1">
    <source>
        <dbReference type="HAMAP-Rule" id="MF_00063"/>
    </source>
</evidence>
<evidence type="ECO:0000256" key="2">
    <source>
        <dbReference type="SAM" id="MobiDB-lite"/>
    </source>
</evidence>
<proteinExistence type="inferred from homology"/>
<comment type="function">
    <text evidence="1">Catalyzes the formation of sulfite from phosphoadenosine 5'-phosphosulfate (PAPS) using thioredoxin as an electron donor.</text>
</comment>
<comment type="catalytic activity">
    <reaction evidence="1">
        <text>[thioredoxin]-disulfide + sulfite + adenosine 3',5'-bisphosphate + 2 H(+) = [thioredoxin]-dithiol + 3'-phosphoadenylyl sulfate</text>
        <dbReference type="Rhea" id="RHEA:11724"/>
        <dbReference type="Rhea" id="RHEA-COMP:10698"/>
        <dbReference type="Rhea" id="RHEA-COMP:10700"/>
        <dbReference type="ChEBI" id="CHEBI:15378"/>
        <dbReference type="ChEBI" id="CHEBI:17359"/>
        <dbReference type="ChEBI" id="CHEBI:29950"/>
        <dbReference type="ChEBI" id="CHEBI:50058"/>
        <dbReference type="ChEBI" id="CHEBI:58339"/>
        <dbReference type="ChEBI" id="CHEBI:58343"/>
        <dbReference type="EC" id="1.8.4.8"/>
    </reaction>
</comment>
<comment type="pathway">
    <text evidence="1">Sulfur metabolism; hydrogen sulfide biosynthesis; sulfite from sulfate: step 3/3.</text>
</comment>
<comment type="subcellular location">
    <subcellularLocation>
        <location evidence="1">Cytoplasm</location>
    </subcellularLocation>
</comment>
<comment type="similarity">
    <text evidence="1">Belongs to the PAPS reductase family. CysH subfamily.</text>
</comment>
<organism>
    <name type="scientific">Gloeobacter violaceus (strain ATCC 29082 / PCC 7421)</name>
    <dbReference type="NCBI Taxonomy" id="251221"/>
    <lineage>
        <taxon>Bacteria</taxon>
        <taxon>Bacillati</taxon>
        <taxon>Cyanobacteriota</taxon>
        <taxon>Cyanophyceae</taxon>
        <taxon>Gloeobacterales</taxon>
        <taxon>Gloeobacteraceae</taxon>
        <taxon>Gloeobacter</taxon>
    </lineage>
</organism>
<reference key="1">
    <citation type="journal article" date="2003" name="DNA Res.">
        <title>Complete genome structure of Gloeobacter violaceus PCC 7421, a cyanobacterium that lacks thylakoids.</title>
        <authorList>
            <person name="Nakamura Y."/>
            <person name="Kaneko T."/>
            <person name="Sato S."/>
            <person name="Mimuro M."/>
            <person name="Miyashita H."/>
            <person name="Tsuchiya T."/>
            <person name="Sasamoto S."/>
            <person name="Watanabe A."/>
            <person name="Kawashima K."/>
            <person name="Kishida Y."/>
            <person name="Kiyokawa C."/>
            <person name="Kohara M."/>
            <person name="Matsumoto M."/>
            <person name="Matsuno A."/>
            <person name="Nakazaki N."/>
            <person name="Shimpo S."/>
            <person name="Takeuchi C."/>
            <person name="Yamada M."/>
            <person name="Tabata S."/>
        </authorList>
    </citation>
    <scope>NUCLEOTIDE SEQUENCE [LARGE SCALE GENOMIC DNA]</scope>
    <source>
        <strain>ATCC 29082 / PCC 7421</strain>
    </source>
</reference>
<protein>
    <recommendedName>
        <fullName evidence="1">Phosphoadenosine 5'-phosphosulfate reductase</fullName>
        <shortName evidence="1">PAPS reductase</shortName>
        <ecNumber evidence="1">1.8.4.8</ecNumber>
    </recommendedName>
    <alternativeName>
        <fullName evidence="1">3'-phosphoadenylylsulfate reductase</fullName>
    </alternativeName>
    <alternativeName>
        <fullName evidence="1">PAPS reductase, thioredoxin dependent</fullName>
    </alternativeName>
    <alternativeName>
        <fullName evidence="1">PAPS sulfotransferase</fullName>
    </alternativeName>
    <alternativeName>
        <fullName evidence="1">PAdoPS reductase</fullName>
    </alternativeName>
</protein>
<gene>
    <name evidence="1" type="primary">cysH</name>
    <name type="ordered locus">glr1656</name>
</gene>
<name>CYSH_GLOVI</name>
<dbReference type="EC" id="1.8.4.8" evidence="1"/>
<dbReference type="EMBL" id="BA000045">
    <property type="protein sequence ID" value="BAC89597.1"/>
    <property type="molecule type" value="Genomic_DNA"/>
</dbReference>
<dbReference type="RefSeq" id="NP_924602.1">
    <property type="nucleotide sequence ID" value="NC_005125.1"/>
</dbReference>
<dbReference type="RefSeq" id="WP_011141655.1">
    <property type="nucleotide sequence ID" value="NC_005125.1"/>
</dbReference>
<dbReference type="SMR" id="Q7NK24"/>
<dbReference type="FunCoup" id="Q7NK24">
    <property type="interactions" value="80"/>
</dbReference>
<dbReference type="STRING" id="251221.gene:10759146"/>
<dbReference type="EnsemblBacteria" id="BAC89597">
    <property type="protein sequence ID" value="BAC89597"/>
    <property type="gene ID" value="BAC89597"/>
</dbReference>
<dbReference type="KEGG" id="gvi:glr1656"/>
<dbReference type="PATRIC" id="fig|251221.4.peg.1693"/>
<dbReference type="eggNOG" id="COG0175">
    <property type="taxonomic scope" value="Bacteria"/>
</dbReference>
<dbReference type="HOGENOM" id="CLU_044089_2_0_3"/>
<dbReference type="InParanoid" id="Q7NK24"/>
<dbReference type="OrthoDB" id="9772604at2"/>
<dbReference type="PhylomeDB" id="Q7NK24"/>
<dbReference type="UniPathway" id="UPA00140">
    <property type="reaction ID" value="UER00206"/>
</dbReference>
<dbReference type="Proteomes" id="UP000000557">
    <property type="component" value="Chromosome"/>
</dbReference>
<dbReference type="GO" id="GO:0005737">
    <property type="term" value="C:cytoplasm"/>
    <property type="evidence" value="ECO:0007669"/>
    <property type="project" value="UniProtKB-SubCell"/>
</dbReference>
<dbReference type="GO" id="GO:0004604">
    <property type="term" value="F:phosphoadenylyl-sulfate reductase (thioredoxin) activity"/>
    <property type="evidence" value="ECO:0000318"/>
    <property type="project" value="GO_Central"/>
</dbReference>
<dbReference type="GO" id="GO:0070814">
    <property type="term" value="P:hydrogen sulfide biosynthetic process"/>
    <property type="evidence" value="ECO:0007669"/>
    <property type="project" value="UniProtKB-UniRule"/>
</dbReference>
<dbReference type="GO" id="GO:0019379">
    <property type="term" value="P:sulfate assimilation, phosphoadenylyl sulfate reduction by phosphoadenylyl-sulfate reductase (thioredoxin)"/>
    <property type="evidence" value="ECO:0000318"/>
    <property type="project" value="GO_Central"/>
</dbReference>
<dbReference type="CDD" id="cd23945">
    <property type="entry name" value="PAPS_reductase"/>
    <property type="match status" value="1"/>
</dbReference>
<dbReference type="Gene3D" id="3.40.50.620">
    <property type="entry name" value="HUPs"/>
    <property type="match status" value="1"/>
</dbReference>
<dbReference type="HAMAP" id="MF_00063">
    <property type="entry name" value="CysH"/>
    <property type="match status" value="1"/>
</dbReference>
<dbReference type="InterPro" id="IPR004511">
    <property type="entry name" value="PAPS/APS_Rdtase"/>
</dbReference>
<dbReference type="InterPro" id="IPR002500">
    <property type="entry name" value="PAPS_reduct_dom"/>
</dbReference>
<dbReference type="InterPro" id="IPR014729">
    <property type="entry name" value="Rossmann-like_a/b/a_fold"/>
</dbReference>
<dbReference type="NCBIfam" id="TIGR00434">
    <property type="entry name" value="cysH"/>
    <property type="match status" value="1"/>
</dbReference>
<dbReference type="NCBIfam" id="NF002537">
    <property type="entry name" value="PRK02090.1"/>
    <property type="match status" value="1"/>
</dbReference>
<dbReference type="PANTHER" id="PTHR46509">
    <property type="entry name" value="PHOSPHOADENOSINE PHOSPHOSULFATE REDUCTASE"/>
    <property type="match status" value="1"/>
</dbReference>
<dbReference type="PANTHER" id="PTHR46509:SF1">
    <property type="entry name" value="PHOSPHOADENOSINE PHOSPHOSULFATE REDUCTASE"/>
    <property type="match status" value="1"/>
</dbReference>
<dbReference type="Pfam" id="PF01507">
    <property type="entry name" value="PAPS_reduct"/>
    <property type="match status" value="1"/>
</dbReference>
<dbReference type="PIRSF" id="PIRSF000857">
    <property type="entry name" value="PAPS_reductase"/>
    <property type="match status" value="1"/>
</dbReference>
<dbReference type="SUPFAM" id="SSF52402">
    <property type="entry name" value="Adenine nucleotide alpha hydrolases-like"/>
    <property type="match status" value="1"/>
</dbReference>
<feature type="chain" id="PRO_1000075072" description="Phosphoadenosine 5'-phosphosulfate reductase">
    <location>
        <begin position="1"/>
        <end position="241"/>
    </location>
</feature>
<feature type="region of interest" description="Disordered" evidence="2">
    <location>
        <begin position="221"/>
        <end position="241"/>
    </location>
</feature>
<feature type="active site" description="Nucleophile; cysteine thiosulfonate intermediate" evidence="1">
    <location>
        <position position="237"/>
    </location>
</feature>
<keyword id="KW-0963">Cytoplasm</keyword>
<keyword id="KW-0560">Oxidoreductase</keyword>
<keyword id="KW-1185">Reference proteome</keyword>
<accession>Q7NK24</accession>